<feature type="chain" id="PRO_0000264228" description="Transcriptional repressor NrdR">
    <location>
        <begin position="1"/>
        <end position="159"/>
    </location>
</feature>
<feature type="domain" description="ATP-cone" evidence="1">
    <location>
        <begin position="49"/>
        <end position="139"/>
    </location>
</feature>
<feature type="zinc finger region" evidence="1">
    <location>
        <begin position="3"/>
        <end position="34"/>
    </location>
</feature>
<reference key="1">
    <citation type="journal article" date="2007" name="Proc. Natl. Acad. Sci. U.S.A.">
        <title>The genome of Syntrophus aciditrophicus: life at the thermodynamic limit of microbial growth.</title>
        <authorList>
            <person name="McInerney M.J."/>
            <person name="Rohlin L."/>
            <person name="Mouttaki H."/>
            <person name="Kim U."/>
            <person name="Krupp R.S."/>
            <person name="Rios-Hernandez L."/>
            <person name="Sieber J."/>
            <person name="Struchtemeyer C.G."/>
            <person name="Bhattacharyya A."/>
            <person name="Campbell J.W."/>
            <person name="Gunsalus R.P."/>
        </authorList>
    </citation>
    <scope>NUCLEOTIDE SEQUENCE [LARGE SCALE GENOMIC DNA]</scope>
    <source>
        <strain>SB</strain>
    </source>
</reference>
<keyword id="KW-0067">ATP-binding</keyword>
<keyword id="KW-0238">DNA-binding</keyword>
<keyword id="KW-0479">Metal-binding</keyword>
<keyword id="KW-0547">Nucleotide-binding</keyword>
<keyword id="KW-1185">Reference proteome</keyword>
<keyword id="KW-0678">Repressor</keyword>
<keyword id="KW-0804">Transcription</keyword>
<keyword id="KW-0805">Transcription regulation</keyword>
<keyword id="KW-0862">Zinc</keyword>
<keyword id="KW-0863">Zinc-finger</keyword>
<organism>
    <name type="scientific">Syntrophus aciditrophicus (strain SB)</name>
    <dbReference type="NCBI Taxonomy" id="56780"/>
    <lineage>
        <taxon>Bacteria</taxon>
        <taxon>Pseudomonadati</taxon>
        <taxon>Thermodesulfobacteriota</taxon>
        <taxon>Syntrophia</taxon>
        <taxon>Syntrophales</taxon>
        <taxon>Syntrophaceae</taxon>
        <taxon>Syntrophus</taxon>
    </lineage>
</organism>
<gene>
    <name evidence="1" type="primary">nrdR</name>
    <name type="ordered locus">SYNAS_01840</name>
    <name type="ORF">SYN_02369</name>
</gene>
<dbReference type="EMBL" id="CP000252">
    <property type="protein sequence ID" value="ABC76063.1"/>
    <property type="molecule type" value="Genomic_DNA"/>
</dbReference>
<dbReference type="RefSeq" id="WP_011416098.1">
    <property type="nucleotide sequence ID" value="NC_007759.1"/>
</dbReference>
<dbReference type="SMR" id="Q2LQM8"/>
<dbReference type="FunCoup" id="Q2LQM8">
    <property type="interactions" value="240"/>
</dbReference>
<dbReference type="STRING" id="56780.SYN_02369"/>
<dbReference type="KEGG" id="sat:SYN_02369"/>
<dbReference type="eggNOG" id="COG1327">
    <property type="taxonomic scope" value="Bacteria"/>
</dbReference>
<dbReference type="HOGENOM" id="CLU_108412_0_0_7"/>
<dbReference type="InParanoid" id="Q2LQM8"/>
<dbReference type="OrthoDB" id="9807461at2"/>
<dbReference type="Proteomes" id="UP000001933">
    <property type="component" value="Chromosome"/>
</dbReference>
<dbReference type="GO" id="GO:0005524">
    <property type="term" value="F:ATP binding"/>
    <property type="evidence" value="ECO:0007669"/>
    <property type="project" value="UniProtKB-KW"/>
</dbReference>
<dbReference type="GO" id="GO:0003677">
    <property type="term" value="F:DNA binding"/>
    <property type="evidence" value="ECO:0007669"/>
    <property type="project" value="UniProtKB-KW"/>
</dbReference>
<dbReference type="GO" id="GO:0008270">
    <property type="term" value="F:zinc ion binding"/>
    <property type="evidence" value="ECO:0007669"/>
    <property type="project" value="UniProtKB-UniRule"/>
</dbReference>
<dbReference type="GO" id="GO:0045892">
    <property type="term" value="P:negative regulation of DNA-templated transcription"/>
    <property type="evidence" value="ECO:0007669"/>
    <property type="project" value="UniProtKB-UniRule"/>
</dbReference>
<dbReference type="HAMAP" id="MF_00440">
    <property type="entry name" value="NrdR"/>
    <property type="match status" value="1"/>
</dbReference>
<dbReference type="InterPro" id="IPR005144">
    <property type="entry name" value="ATP-cone_dom"/>
</dbReference>
<dbReference type="InterPro" id="IPR055173">
    <property type="entry name" value="NrdR-like_N"/>
</dbReference>
<dbReference type="InterPro" id="IPR003796">
    <property type="entry name" value="RNR_NrdR-like"/>
</dbReference>
<dbReference type="NCBIfam" id="TIGR00244">
    <property type="entry name" value="transcriptional regulator NrdR"/>
    <property type="match status" value="1"/>
</dbReference>
<dbReference type="PANTHER" id="PTHR30455">
    <property type="entry name" value="TRANSCRIPTIONAL REPRESSOR NRDR"/>
    <property type="match status" value="1"/>
</dbReference>
<dbReference type="PANTHER" id="PTHR30455:SF2">
    <property type="entry name" value="TRANSCRIPTIONAL REPRESSOR NRDR"/>
    <property type="match status" value="1"/>
</dbReference>
<dbReference type="Pfam" id="PF03477">
    <property type="entry name" value="ATP-cone"/>
    <property type="match status" value="1"/>
</dbReference>
<dbReference type="Pfam" id="PF22811">
    <property type="entry name" value="Zn_ribbon_NrdR"/>
    <property type="match status" value="1"/>
</dbReference>
<dbReference type="PROSITE" id="PS51161">
    <property type="entry name" value="ATP_CONE"/>
    <property type="match status" value="1"/>
</dbReference>
<protein>
    <recommendedName>
        <fullName evidence="1">Transcriptional repressor NrdR</fullName>
    </recommendedName>
</protein>
<sequence>MKCPFCGGVENKVMDSRVSRDGNAIRRRRECLACGRRFTTYEYIEEMLPTVVKKDGRREPFDRNKIRMGIRKACEKRPISTETIESLVTEVERFCQDYSGEEIRSSMIGEKIMKLLKELDGVAYVRFASVYRQFRDVNDFLEELKEFKQLHDLKKEKEP</sequence>
<name>NRDR_SYNAS</name>
<comment type="function">
    <text evidence="1">Negatively regulates transcription of bacterial ribonucleotide reductase nrd genes and operons by binding to NrdR-boxes.</text>
</comment>
<comment type="cofactor">
    <cofactor evidence="1">
        <name>Zn(2+)</name>
        <dbReference type="ChEBI" id="CHEBI:29105"/>
    </cofactor>
    <text evidence="1">Binds 1 zinc ion.</text>
</comment>
<comment type="similarity">
    <text evidence="1">Belongs to the NrdR family.</text>
</comment>
<evidence type="ECO:0000255" key="1">
    <source>
        <dbReference type="HAMAP-Rule" id="MF_00440"/>
    </source>
</evidence>
<proteinExistence type="inferred from homology"/>
<accession>Q2LQM8</accession>